<keyword id="KW-0002">3D-structure</keyword>
<keyword id="KW-1015">Disulfide bond</keyword>
<keyword id="KW-0256">Endoplasmic reticulum</keyword>
<keyword id="KW-0325">Glycoprotein</keyword>
<keyword id="KW-0560">Oxidoreductase</keyword>
<keyword id="KW-0676">Redox-active center</keyword>
<keyword id="KW-1185">Reference proteome</keyword>
<keyword id="KW-0677">Repeat</keyword>
<keyword id="KW-0732">Signal</keyword>
<comment type="function">
    <text evidence="5 6 7 9">Endoplasmic reticulum disulfide reductase involved both in the correct folding of proteins and degradation of misfolded proteins. Required for efficient folding of proteins in the endoplasmic reticulum by catalyzing the removal of non-native disulfide bonds formed during the folding of proteins, such as LDLR. Also involved in endoplasmic reticulum-associated degradation (ERAD) by reducing incorrect disulfide bonds in misfolded glycoproteins recognized by EDEM1. Interaction with HSPA5 is required its activity, not for the disulfide reductase activity, but to facilitate the release of DNAJC10 from its substrate. Promotes apoptotic signaling pathway in response to endoplasmic reticulum stress.</text>
</comment>
<comment type="subunit">
    <text evidence="6 7 9">Interacts with HSPA5 (via its J domain). Interacts with EDEM1.</text>
</comment>
<comment type="subcellular location">
    <subcellularLocation>
        <location evidence="4 6">Endoplasmic reticulum lumen</location>
    </subcellularLocation>
</comment>
<comment type="tissue specificity">
    <text evidence="5 6">Ubiquitous. Particularly abundant in secretory tissues. Ubiquitous in fetal tissues and tumor tissues. Higher expression in fetal tissues than in adult tissues. Expressed in testis, pancreas, fetal thymus and fetal kidney. High expression in heart, liver, kidney, and testis. Low expression in spleen and skeletal muscle.</text>
</comment>
<comment type="domain">
    <text evidence="9">Thioredoxin domains 3 and 4 are the primary reductase domains.</text>
</comment>
<comment type="domain">
    <text evidence="9">The thioredoxin-like regions Trxb 1 and 2 lack a redox-active CXXC motif.</text>
</comment>
<comment type="disruption phenotype">
    <text evidence="8">Mice are viable and healthy but show enhanced endoplasmic reticulum stress response in the salivary gland.</text>
</comment>
<evidence type="ECO:0000255" key="1"/>
<evidence type="ECO:0000255" key="2">
    <source>
        <dbReference type="PROSITE-ProRule" id="PRU00286"/>
    </source>
</evidence>
<evidence type="ECO:0000255" key="3">
    <source>
        <dbReference type="PROSITE-ProRule" id="PRU00691"/>
    </source>
</evidence>
<evidence type="ECO:0000255" key="4">
    <source>
        <dbReference type="PROSITE-ProRule" id="PRU10138"/>
    </source>
</evidence>
<evidence type="ECO:0000269" key="5">
    <source>
    </source>
</evidence>
<evidence type="ECO:0000269" key="6">
    <source>
    </source>
</evidence>
<evidence type="ECO:0000269" key="7">
    <source>
    </source>
</evidence>
<evidence type="ECO:0000269" key="8">
    <source>
    </source>
</evidence>
<evidence type="ECO:0000269" key="9">
    <source>
    </source>
</evidence>
<evidence type="ECO:0000305" key="10"/>
<evidence type="ECO:0007829" key="11">
    <source>
        <dbReference type="PDB" id="3APO"/>
    </source>
</evidence>
<evidence type="ECO:0007829" key="12">
    <source>
        <dbReference type="PDB" id="3APQ"/>
    </source>
</evidence>
<evidence type="ECO:0007829" key="13">
    <source>
        <dbReference type="PDB" id="3APS"/>
    </source>
</evidence>
<evidence type="ECO:0007829" key="14">
    <source>
        <dbReference type="PDB" id="5AYK"/>
    </source>
</evidence>
<evidence type="ECO:0007829" key="15">
    <source>
        <dbReference type="PDB" id="5AYL"/>
    </source>
</evidence>
<accession>Q9DC23</accession>
<accession>A2ASA2</accession>
<accession>Q71S84</accession>
<accession>Q8CH78</accession>
<accession>Q8CIB0</accession>
<accession>Q99LV4</accession>
<sequence>MGVWLNKDDFIRDLKRISLCLLILYVVVVVGTDQNFYSLLGVSKTASSREIRQAFKKLALKLHPDKNPNNPNAHGDFLKINRAYEVLKDEDLRKKYDKYGEKGLEDNQGGQYESWSYYRYDFGIYDDDPEIITLERREFDAAVNSGELWFVNFYSPGCSHCHDLAPTWREFAKEVDGLLRIGAVNCGDDRMLCRMKGVNSYPSLFIFRSGMAAVKYNGDRSKESLVAFAMQHVRSTVTELSTGNFVNAIETAFAAGVGWLITFCSKGEDCLTSQTRLRLSGMLDGLVNVGWVDCDAQDSLCKSLDTTASTTAYFPPGATLNDREKSSVLFLNSLDAKEIYMEIIHNLPDFELLSANQLEDRLAHHRWLVFFHFGKNENANDPELKKLKTLLKNEHIQVGRFDCSSAPGICSDLYVFQPCLAVFKGQGTKEYEIHHGKKILYDILAFAKESVNSHVTTLGPQNFPASDKEPWLVDFFAPWCPPCRALLPELRKASTLLYGQLKVGTLDCTIHEGLCNMYNIQAYPTTVVFNQSSIHEYEGHHSAEQILEFIEDLRNPSVVSLTPSTFNELVKQRKHDEVWMVDFYSPWCHPCQVLMPEWKRMARTLTGLINVGSVDCQQYHSFCTQENVQRYPEIRFYPQKSSKAYQYHSYNGWNRDAYSLRSWGLGFLPQASIDLTPQTFNEKVLQGKTHWVVDFYAPWCGPCQNFAPEFELLARMIKGKVRAGKVDCQAYPQTCQKAGIKAYPSVKLYQYERAKKSIWEEQINSRDAKTIAALIYGKLETLQSQVKRNKDEL</sequence>
<dbReference type="EC" id="1.8.4.-"/>
<dbReference type="EMBL" id="AF255459">
    <property type="protein sequence ID" value="AAN73273.1"/>
    <property type="molecule type" value="mRNA"/>
</dbReference>
<dbReference type="EMBL" id="AF314002">
    <property type="protein sequence ID" value="AAQ14555.1"/>
    <property type="molecule type" value="mRNA"/>
</dbReference>
<dbReference type="EMBL" id="AK004617">
    <property type="protein sequence ID" value="BAB23413.1"/>
    <property type="molecule type" value="mRNA"/>
</dbReference>
<dbReference type="EMBL" id="AL928587">
    <property type="status" value="NOT_ANNOTATED_CDS"/>
    <property type="molecule type" value="Genomic_DNA"/>
</dbReference>
<dbReference type="EMBL" id="BC002207">
    <property type="protein sequence ID" value="AAH02207.1"/>
    <property type="molecule type" value="mRNA"/>
</dbReference>
<dbReference type="EMBL" id="BC033461">
    <property type="protein sequence ID" value="AAH33461.1"/>
    <property type="molecule type" value="mRNA"/>
</dbReference>
<dbReference type="CCDS" id="CCDS38159.1"/>
<dbReference type="RefSeq" id="NP_077143.2">
    <property type="nucleotide sequence ID" value="NM_024181.2"/>
</dbReference>
<dbReference type="PDB" id="3APO">
    <property type="method" value="X-ray"/>
    <property type="resolution" value="2.40 A"/>
    <property type="chains" value="A=33-793"/>
</dbReference>
<dbReference type="PDB" id="3APQ">
    <property type="method" value="X-ray"/>
    <property type="resolution" value="1.84 A"/>
    <property type="chains" value="A/B=34-242"/>
</dbReference>
<dbReference type="PDB" id="3APS">
    <property type="method" value="X-ray"/>
    <property type="resolution" value="1.90 A"/>
    <property type="chains" value="A/B=668-789"/>
</dbReference>
<dbReference type="PDB" id="5AYK">
    <property type="method" value="X-ray"/>
    <property type="resolution" value="2.25 A"/>
    <property type="chains" value="A=32-793"/>
</dbReference>
<dbReference type="PDB" id="5AYL">
    <property type="method" value="X-ray"/>
    <property type="resolution" value="2.40 A"/>
    <property type="chains" value="A=32-793"/>
</dbReference>
<dbReference type="PDBsum" id="3APO"/>
<dbReference type="PDBsum" id="3APQ"/>
<dbReference type="PDBsum" id="3APS"/>
<dbReference type="PDBsum" id="5AYK"/>
<dbReference type="PDBsum" id="5AYL"/>
<dbReference type="SMR" id="Q9DC23"/>
<dbReference type="BioGRID" id="211769">
    <property type="interactions" value="19"/>
</dbReference>
<dbReference type="FunCoup" id="Q9DC23">
    <property type="interactions" value="3091"/>
</dbReference>
<dbReference type="IntAct" id="Q9DC23">
    <property type="interactions" value="2"/>
</dbReference>
<dbReference type="MINT" id="Q9DC23"/>
<dbReference type="STRING" id="10090.ENSMUSP00000028392"/>
<dbReference type="GlyCosmos" id="Q9DC23">
    <property type="glycosylation" value="1 site, No reported glycans"/>
</dbReference>
<dbReference type="GlyGen" id="Q9DC23">
    <property type="glycosylation" value="2 sites, 1 O-linked glycan (1 site)"/>
</dbReference>
<dbReference type="iPTMnet" id="Q9DC23"/>
<dbReference type="PhosphoSitePlus" id="Q9DC23"/>
<dbReference type="SwissPalm" id="Q9DC23"/>
<dbReference type="PaxDb" id="10090-ENSMUSP00000028392"/>
<dbReference type="PeptideAtlas" id="Q9DC23"/>
<dbReference type="ProteomicsDB" id="279417"/>
<dbReference type="Pumba" id="Q9DC23"/>
<dbReference type="Antibodypedia" id="33990">
    <property type="antibodies" value="227 antibodies from 29 providers"/>
</dbReference>
<dbReference type="DNASU" id="66861"/>
<dbReference type="Ensembl" id="ENSMUST00000028392.8">
    <property type="protein sequence ID" value="ENSMUSP00000028392.8"/>
    <property type="gene ID" value="ENSMUSG00000027006.14"/>
</dbReference>
<dbReference type="GeneID" id="66861"/>
<dbReference type="KEGG" id="mmu:66861"/>
<dbReference type="UCSC" id="uc008khj.1">
    <property type="organism name" value="mouse"/>
</dbReference>
<dbReference type="AGR" id="MGI:1914111"/>
<dbReference type="CTD" id="54431"/>
<dbReference type="MGI" id="MGI:1914111">
    <property type="gene designation" value="Dnajc10"/>
</dbReference>
<dbReference type="VEuPathDB" id="HostDB:ENSMUSG00000027006"/>
<dbReference type="eggNOG" id="KOG0191">
    <property type="taxonomic scope" value="Eukaryota"/>
</dbReference>
<dbReference type="eggNOG" id="KOG0713">
    <property type="taxonomic scope" value="Eukaryota"/>
</dbReference>
<dbReference type="GeneTree" id="ENSGT00940000155558"/>
<dbReference type="HOGENOM" id="CLU_023279_0_0_1"/>
<dbReference type="InParanoid" id="Q9DC23"/>
<dbReference type="OMA" id="APTWRKF"/>
<dbReference type="OrthoDB" id="5810603at2759"/>
<dbReference type="PhylomeDB" id="Q9DC23"/>
<dbReference type="TreeFam" id="TF105169"/>
<dbReference type="BRENDA" id="1.8.1.8">
    <property type="organism ID" value="3474"/>
</dbReference>
<dbReference type="BioGRID-ORCS" id="66861">
    <property type="hits" value="1 hit in 76 CRISPR screens"/>
</dbReference>
<dbReference type="ChiTaRS" id="Dnajc10">
    <property type="organism name" value="mouse"/>
</dbReference>
<dbReference type="EvolutionaryTrace" id="Q9DC23"/>
<dbReference type="PRO" id="PR:Q9DC23"/>
<dbReference type="Proteomes" id="UP000000589">
    <property type="component" value="Chromosome 2"/>
</dbReference>
<dbReference type="RNAct" id="Q9DC23">
    <property type="molecule type" value="protein"/>
</dbReference>
<dbReference type="Bgee" id="ENSMUSG00000027006">
    <property type="expression patterns" value="Expressed in prostate gland ventral lobe and 255 other cell types or tissues"/>
</dbReference>
<dbReference type="GO" id="GO:0005783">
    <property type="term" value="C:endoplasmic reticulum"/>
    <property type="evidence" value="ECO:0000314"/>
    <property type="project" value="UniProtKB"/>
</dbReference>
<dbReference type="GO" id="GO:0034663">
    <property type="term" value="C:endoplasmic reticulum chaperone complex"/>
    <property type="evidence" value="ECO:0000250"/>
    <property type="project" value="UniProtKB"/>
</dbReference>
<dbReference type="GO" id="GO:0005788">
    <property type="term" value="C:endoplasmic reticulum lumen"/>
    <property type="evidence" value="ECO:0000250"/>
    <property type="project" value="UniProtKB"/>
</dbReference>
<dbReference type="GO" id="GO:0001671">
    <property type="term" value="F:ATPase activator activity"/>
    <property type="evidence" value="ECO:0000315"/>
    <property type="project" value="UniProtKB"/>
</dbReference>
<dbReference type="GO" id="GO:0051117">
    <property type="term" value="F:ATPase binding"/>
    <property type="evidence" value="ECO:0000353"/>
    <property type="project" value="UniProtKB"/>
</dbReference>
<dbReference type="GO" id="GO:0015036">
    <property type="term" value="F:disulfide oxidoreductase activity"/>
    <property type="evidence" value="ECO:0000314"/>
    <property type="project" value="UniProtKB"/>
</dbReference>
<dbReference type="GO" id="GO:0030544">
    <property type="term" value="F:Hsp70 protein binding"/>
    <property type="evidence" value="ECO:0007669"/>
    <property type="project" value="Ensembl"/>
</dbReference>
<dbReference type="GO" id="GO:0051787">
    <property type="term" value="F:misfolded protein binding"/>
    <property type="evidence" value="ECO:0000250"/>
    <property type="project" value="UniProtKB"/>
</dbReference>
<dbReference type="GO" id="GO:0016671">
    <property type="term" value="F:oxidoreductase activity, acting on a sulfur group of donors, disulfide as acceptor"/>
    <property type="evidence" value="ECO:0000314"/>
    <property type="project" value="UniProtKB"/>
</dbReference>
<dbReference type="GO" id="GO:0015035">
    <property type="term" value="F:protein-disulfide reductase activity"/>
    <property type="evidence" value="ECO:0000314"/>
    <property type="project" value="UniProtKB"/>
</dbReference>
<dbReference type="GO" id="GO:0051087">
    <property type="term" value="F:protein-folding chaperone binding"/>
    <property type="evidence" value="ECO:0000314"/>
    <property type="project" value="UniProtKB"/>
</dbReference>
<dbReference type="GO" id="GO:0036503">
    <property type="term" value="P:ERAD pathway"/>
    <property type="evidence" value="ECO:0000314"/>
    <property type="project" value="UniProtKB"/>
</dbReference>
<dbReference type="GO" id="GO:0070059">
    <property type="term" value="P:intrinsic apoptotic signaling pathway in response to endoplasmic reticulum stress"/>
    <property type="evidence" value="ECO:0000250"/>
    <property type="project" value="UniProtKB"/>
</dbReference>
<dbReference type="GO" id="GO:0034975">
    <property type="term" value="P:protein folding in endoplasmic reticulum"/>
    <property type="evidence" value="ECO:0000250"/>
    <property type="project" value="UniProtKB"/>
</dbReference>
<dbReference type="GO" id="GO:0034976">
    <property type="term" value="P:response to endoplasmic reticulum stress"/>
    <property type="evidence" value="ECO:0000250"/>
    <property type="project" value="UniProtKB"/>
</dbReference>
<dbReference type="CDD" id="cd06257">
    <property type="entry name" value="DnaJ"/>
    <property type="match status" value="1"/>
</dbReference>
<dbReference type="CDD" id="cd03004">
    <property type="entry name" value="PDI_a_ERdj5_C"/>
    <property type="match status" value="3"/>
</dbReference>
<dbReference type="CDD" id="cd03003">
    <property type="entry name" value="PDI_a_ERdj5_N"/>
    <property type="match status" value="1"/>
</dbReference>
<dbReference type="FunFam" id="1.10.287.110:FF:000029">
    <property type="entry name" value="DnaJ homolog subfamily C member 10"/>
    <property type="match status" value="1"/>
</dbReference>
<dbReference type="FunFam" id="3.40.30.10:FF:000087">
    <property type="entry name" value="DnaJ homolog subfamily C member 10"/>
    <property type="match status" value="1"/>
</dbReference>
<dbReference type="FunFam" id="3.40.30.10:FF:000106">
    <property type="entry name" value="DnaJ homolog subfamily C member 10"/>
    <property type="match status" value="1"/>
</dbReference>
<dbReference type="FunFam" id="3.40.30.10:FF:000125">
    <property type="entry name" value="DnaJ homolog subfamily C member 10"/>
    <property type="match status" value="1"/>
</dbReference>
<dbReference type="FunFam" id="3.40.30.10:FF:000135">
    <property type="entry name" value="DnaJ homolog subfamily C member 10"/>
    <property type="match status" value="1"/>
</dbReference>
<dbReference type="FunFam" id="3.40.30.10:FF:000137">
    <property type="entry name" value="DnaJ homolog subfamily C member 10"/>
    <property type="match status" value="1"/>
</dbReference>
<dbReference type="FunFam" id="3.40.30.10:FF:000169">
    <property type="entry name" value="DnaJ homolog subfamily C member 10"/>
    <property type="match status" value="1"/>
</dbReference>
<dbReference type="Gene3D" id="1.10.287.110">
    <property type="entry name" value="DnaJ domain"/>
    <property type="match status" value="1"/>
</dbReference>
<dbReference type="Gene3D" id="3.40.30.10">
    <property type="entry name" value="Glutaredoxin"/>
    <property type="match status" value="6"/>
</dbReference>
<dbReference type="InterPro" id="IPR001623">
    <property type="entry name" value="DnaJ_domain"/>
</dbReference>
<dbReference type="InterPro" id="IPR052460">
    <property type="entry name" value="ER_disulfide_reductase"/>
</dbReference>
<dbReference type="InterPro" id="IPR021170">
    <property type="entry name" value="ERdj5"/>
</dbReference>
<dbReference type="InterPro" id="IPR035674">
    <property type="entry name" value="ERdj5_TRX_C"/>
</dbReference>
<dbReference type="InterPro" id="IPR035673">
    <property type="entry name" value="ERdj5_TRX_N"/>
</dbReference>
<dbReference type="InterPro" id="IPR036869">
    <property type="entry name" value="J_dom_sf"/>
</dbReference>
<dbReference type="InterPro" id="IPR036249">
    <property type="entry name" value="Thioredoxin-like_sf"/>
</dbReference>
<dbReference type="InterPro" id="IPR017937">
    <property type="entry name" value="Thioredoxin_CS"/>
</dbReference>
<dbReference type="InterPro" id="IPR013766">
    <property type="entry name" value="Thioredoxin_domain"/>
</dbReference>
<dbReference type="PANTHER" id="PTHR44340">
    <property type="entry name" value="DNAJ HOMOLOG SUBFAMILY C MEMBER 10"/>
    <property type="match status" value="1"/>
</dbReference>
<dbReference type="PANTHER" id="PTHR44340:SF1">
    <property type="entry name" value="DNAJ HOMOLOG SUBFAMILY C MEMBER 10"/>
    <property type="match status" value="1"/>
</dbReference>
<dbReference type="Pfam" id="PF00226">
    <property type="entry name" value="DnaJ"/>
    <property type="match status" value="1"/>
</dbReference>
<dbReference type="Pfam" id="PF00085">
    <property type="entry name" value="Thioredoxin"/>
    <property type="match status" value="4"/>
</dbReference>
<dbReference type="PIRSF" id="PIRSF037293">
    <property type="entry name" value="DnaJ_homolog_subfam-C"/>
    <property type="match status" value="1"/>
</dbReference>
<dbReference type="PRINTS" id="PR00625">
    <property type="entry name" value="JDOMAIN"/>
</dbReference>
<dbReference type="SMART" id="SM00271">
    <property type="entry name" value="DnaJ"/>
    <property type="match status" value="1"/>
</dbReference>
<dbReference type="SUPFAM" id="SSF46565">
    <property type="entry name" value="Chaperone J-domain"/>
    <property type="match status" value="1"/>
</dbReference>
<dbReference type="SUPFAM" id="SSF52833">
    <property type="entry name" value="Thioredoxin-like"/>
    <property type="match status" value="6"/>
</dbReference>
<dbReference type="PROSITE" id="PS50076">
    <property type="entry name" value="DNAJ_2"/>
    <property type="match status" value="1"/>
</dbReference>
<dbReference type="PROSITE" id="PS00014">
    <property type="entry name" value="ER_TARGET"/>
    <property type="match status" value="1"/>
</dbReference>
<dbReference type="PROSITE" id="PS00194">
    <property type="entry name" value="THIOREDOXIN_1"/>
    <property type="match status" value="2"/>
</dbReference>
<dbReference type="PROSITE" id="PS51352">
    <property type="entry name" value="THIOREDOXIN_2"/>
    <property type="match status" value="3"/>
</dbReference>
<proteinExistence type="evidence at protein level"/>
<gene>
    <name type="primary">Dnajc10</name>
    <name type="synonym">Erdj5</name>
    <name type="synonym">Jpdi</name>
</gene>
<reference key="1">
    <citation type="journal article" date="2003" name="J. Biol. Chem.">
        <title>ERdj5, an endoplasmic reticulum (ER)-resident protein containing DnaJ and thioredoxin domains, is expressed in secretory cells or following ER stress.</title>
        <authorList>
            <person name="Cunnea P.M."/>
            <person name="Miranda-Vizuete A."/>
            <person name="Bertoli G."/>
            <person name="Simmen T."/>
            <person name="Damdimopoulos A.E."/>
            <person name="Hermann S."/>
            <person name="Leinonen S."/>
            <person name="Huikko M.P."/>
            <person name="Gustafsson J.-A."/>
            <person name="Sitia R."/>
            <person name="Spyrou G."/>
        </authorList>
    </citation>
    <scope>NUCLEOTIDE SEQUENCE [MRNA]</scope>
    <scope>FUNCTION</scope>
    <scope>TISSUE SPECIFICITY</scope>
</reference>
<reference key="2">
    <citation type="submission" date="2000-10" db="EMBL/GenBank/DDBJ databases">
        <title>ERDJPs, a novel family of ER chaperones.</title>
        <authorList>
            <person name="Simmen T."/>
            <person name="Mezghrani A."/>
            <person name="Bertoli G."/>
            <person name="Sitia R."/>
        </authorList>
    </citation>
    <scope>NUCLEOTIDE SEQUENCE [MRNA]</scope>
</reference>
<reference key="3">
    <citation type="journal article" date="2005" name="Science">
        <title>The transcriptional landscape of the mammalian genome.</title>
        <authorList>
            <person name="Carninci P."/>
            <person name="Kasukawa T."/>
            <person name="Katayama S."/>
            <person name="Gough J."/>
            <person name="Frith M.C."/>
            <person name="Maeda N."/>
            <person name="Oyama R."/>
            <person name="Ravasi T."/>
            <person name="Lenhard B."/>
            <person name="Wells C."/>
            <person name="Kodzius R."/>
            <person name="Shimokawa K."/>
            <person name="Bajic V.B."/>
            <person name="Brenner S.E."/>
            <person name="Batalov S."/>
            <person name="Forrest A.R."/>
            <person name="Zavolan M."/>
            <person name="Davis M.J."/>
            <person name="Wilming L.G."/>
            <person name="Aidinis V."/>
            <person name="Allen J.E."/>
            <person name="Ambesi-Impiombato A."/>
            <person name="Apweiler R."/>
            <person name="Aturaliya R.N."/>
            <person name="Bailey T.L."/>
            <person name="Bansal M."/>
            <person name="Baxter L."/>
            <person name="Beisel K.W."/>
            <person name="Bersano T."/>
            <person name="Bono H."/>
            <person name="Chalk A.M."/>
            <person name="Chiu K.P."/>
            <person name="Choudhary V."/>
            <person name="Christoffels A."/>
            <person name="Clutterbuck D.R."/>
            <person name="Crowe M.L."/>
            <person name="Dalla E."/>
            <person name="Dalrymple B.P."/>
            <person name="de Bono B."/>
            <person name="Della Gatta G."/>
            <person name="di Bernardo D."/>
            <person name="Down T."/>
            <person name="Engstrom P."/>
            <person name="Fagiolini M."/>
            <person name="Faulkner G."/>
            <person name="Fletcher C.F."/>
            <person name="Fukushima T."/>
            <person name="Furuno M."/>
            <person name="Futaki S."/>
            <person name="Gariboldi M."/>
            <person name="Georgii-Hemming P."/>
            <person name="Gingeras T.R."/>
            <person name="Gojobori T."/>
            <person name="Green R.E."/>
            <person name="Gustincich S."/>
            <person name="Harbers M."/>
            <person name="Hayashi Y."/>
            <person name="Hensch T.K."/>
            <person name="Hirokawa N."/>
            <person name="Hill D."/>
            <person name="Huminiecki L."/>
            <person name="Iacono M."/>
            <person name="Ikeo K."/>
            <person name="Iwama A."/>
            <person name="Ishikawa T."/>
            <person name="Jakt M."/>
            <person name="Kanapin A."/>
            <person name="Katoh M."/>
            <person name="Kawasawa Y."/>
            <person name="Kelso J."/>
            <person name="Kitamura H."/>
            <person name="Kitano H."/>
            <person name="Kollias G."/>
            <person name="Krishnan S.P."/>
            <person name="Kruger A."/>
            <person name="Kummerfeld S.K."/>
            <person name="Kurochkin I.V."/>
            <person name="Lareau L.F."/>
            <person name="Lazarevic D."/>
            <person name="Lipovich L."/>
            <person name="Liu J."/>
            <person name="Liuni S."/>
            <person name="McWilliam S."/>
            <person name="Madan Babu M."/>
            <person name="Madera M."/>
            <person name="Marchionni L."/>
            <person name="Matsuda H."/>
            <person name="Matsuzawa S."/>
            <person name="Miki H."/>
            <person name="Mignone F."/>
            <person name="Miyake S."/>
            <person name="Morris K."/>
            <person name="Mottagui-Tabar S."/>
            <person name="Mulder N."/>
            <person name="Nakano N."/>
            <person name="Nakauchi H."/>
            <person name="Ng P."/>
            <person name="Nilsson R."/>
            <person name="Nishiguchi S."/>
            <person name="Nishikawa S."/>
            <person name="Nori F."/>
            <person name="Ohara O."/>
            <person name="Okazaki Y."/>
            <person name="Orlando V."/>
            <person name="Pang K.C."/>
            <person name="Pavan W.J."/>
            <person name="Pavesi G."/>
            <person name="Pesole G."/>
            <person name="Petrovsky N."/>
            <person name="Piazza S."/>
            <person name="Reed J."/>
            <person name="Reid J.F."/>
            <person name="Ring B.Z."/>
            <person name="Ringwald M."/>
            <person name="Rost B."/>
            <person name="Ruan Y."/>
            <person name="Salzberg S.L."/>
            <person name="Sandelin A."/>
            <person name="Schneider C."/>
            <person name="Schoenbach C."/>
            <person name="Sekiguchi K."/>
            <person name="Semple C.A."/>
            <person name="Seno S."/>
            <person name="Sessa L."/>
            <person name="Sheng Y."/>
            <person name="Shibata Y."/>
            <person name="Shimada H."/>
            <person name="Shimada K."/>
            <person name="Silva D."/>
            <person name="Sinclair B."/>
            <person name="Sperling S."/>
            <person name="Stupka E."/>
            <person name="Sugiura K."/>
            <person name="Sultana R."/>
            <person name="Takenaka Y."/>
            <person name="Taki K."/>
            <person name="Tammoja K."/>
            <person name="Tan S.L."/>
            <person name="Tang S."/>
            <person name="Taylor M.S."/>
            <person name="Tegner J."/>
            <person name="Teichmann S.A."/>
            <person name="Ueda H.R."/>
            <person name="van Nimwegen E."/>
            <person name="Verardo R."/>
            <person name="Wei C.L."/>
            <person name="Yagi K."/>
            <person name="Yamanishi H."/>
            <person name="Zabarovsky E."/>
            <person name="Zhu S."/>
            <person name="Zimmer A."/>
            <person name="Hide W."/>
            <person name="Bult C."/>
            <person name="Grimmond S.M."/>
            <person name="Teasdale R.D."/>
            <person name="Liu E.T."/>
            <person name="Brusic V."/>
            <person name="Quackenbush J."/>
            <person name="Wahlestedt C."/>
            <person name="Mattick J.S."/>
            <person name="Hume D.A."/>
            <person name="Kai C."/>
            <person name="Sasaki D."/>
            <person name="Tomaru Y."/>
            <person name="Fukuda S."/>
            <person name="Kanamori-Katayama M."/>
            <person name="Suzuki M."/>
            <person name="Aoki J."/>
            <person name="Arakawa T."/>
            <person name="Iida J."/>
            <person name="Imamura K."/>
            <person name="Itoh M."/>
            <person name="Kato T."/>
            <person name="Kawaji H."/>
            <person name="Kawagashira N."/>
            <person name="Kawashima T."/>
            <person name="Kojima M."/>
            <person name="Kondo S."/>
            <person name="Konno H."/>
            <person name="Nakano K."/>
            <person name="Ninomiya N."/>
            <person name="Nishio T."/>
            <person name="Okada M."/>
            <person name="Plessy C."/>
            <person name="Shibata K."/>
            <person name="Shiraki T."/>
            <person name="Suzuki S."/>
            <person name="Tagami M."/>
            <person name="Waki K."/>
            <person name="Watahiki A."/>
            <person name="Okamura-Oho Y."/>
            <person name="Suzuki H."/>
            <person name="Kawai J."/>
            <person name="Hayashizaki Y."/>
        </authorList>
    </citation>
    <scope>NUCLEOTIDE SEQUENCE [LARGE SCALE MRNA]</scope>
    <source>
        <strain>C57BL/6J</strain>
        <tissue>Lung</tissue>
    </source>
</reference>
<reference key="4">
    <citation type="journal article" date="2009" name="PLoS Biol.">
        <title>Lineage-specific biology revealed by a finished genome assembly of the mouse.</title>
        <authorList>
            <person name="Church D.M."/>
            <person name="Goodstadt L."/>
            <person name="Hillier L.W."/>
            <person name="Zody M.C."/>
            <person name="Goldstein S."/>
            <person name="She X."/>
            <person name="Bult C.J."/>
            <person name="Agarwala R."/>
            <person name="Cherry J.L."/>
            <person name="DiCuccio M."/>
            <person name="Hlavina W."/>
            <person name="Kapustin Y."/>
            <person name="Meric P."/>
            <person name="Maglott D."/>
            <person name="Birtle Z."/>
            <person name="Marques A.C."/>
            <person name="Graves T."/>
            <person name="Zhou S."/>
            <person name="Teague B."/>
            <person name="Potamousis K."/>
            <person name="Churas C."/>
            <person name="Place M."/>
            <person name="Herschleb J."/>
            <person name="Runnheim R."/>
            <person name="Forrest D."/>
            <person name="Amos-Landgraf J."/>
            <person name="Schwartz D.C."/>
            <person name="Cheng Z."/>
            <person name="Lindblad-Toh K."/>
            <person name="Eichler E.E."/>
            <person name="Ponting C.P."/>
        </authorList>
    </citation>
    <scope>NUCLEOTIDE SEQUENCE [LARGE SCALE GENOMIC DNA]</scope>
    <source>
        <strain>C57BL/6J</strain>
    </source>
</reference>
<reference key="5">
    <citation type="journal article" date="2004" name="Genome Res.">
        <title>The status, quality, and expansion of the NIH full-length cDNA project: the Mammalian Gene Collection (MGC).</title>
        <authorList>
            <consortium name="The MGC Project Team"/>
        </authorList>
    </citation>
    <scope>NUCLEOTIDE SEQUENCE [LARGE SCALE MRNA]</scope>
    <source>
        <strain>Czech II</strain>
        <strain>FVB/N x C57BL/6J</strain>
        <tissue>Mammary tumor</tissue>
    </source>
</reference>
<reference key="6">
    <citation type="journal article" date="2003" name="J. Biol. Chem.">
        <title>JPDI, a novel endoplasmic reticulum-resident protein containing both a BiP-interacting J-domain and thioredoxin-like motifs.</title>
        <authorList>
            <person name="Hosoda A."/>
            <person name="Kimata Y."/>
            <person name="Tsuru A."/>
            <person name="Kohno K."/>
        </authorList>
    </citation>
    <scope>FUNCTION</scope>
    <scope>SUBCELLULAR LOCATION</scope>
    <scope>TISSUE SPECIFICITY</scope>
    <scope>GLYCOSYLATION</scope>
    <scope>INTERACTION WITH HSPA5</scope>
</reference>
<reference key="7">
    <citation type="journal article" date="2008" name="Science">
        <title>ERdj5 is required as a disulfide reductase for degradation of misfolded proteins in the ER.</title>
        <authorList>
            <person name="Ushioda R."/>
            <person name="Hoseki J."/>
            <person name="Araki K."/>
            <person name="Jansen G."/>
            <person name="Thomas D.Y."/>
            <person name="Nagata K."/>
        </authorList>
    </citation>
    <scope>FUNCTION</scope>
    <scope>INTERACTION WITH EDEM1</scope>
    <scope>MUTAGENESIS OF CYS-158; CYS-161; CYS-480; CYS-483; CYS-588; CYS-591; CYS-700 AND CYS-703</scope>
</reference>
<reference key="8">
    <citation type="journal article" date="2010" name="Biochem. J.">
        <title>Positive contribution of ERdj5/JPDI to endoplasmic reticulum protein quality control in the salivary gland.</title>
        <authorList>
            <person name="Hosoda A."/>
            <person name="Tokuda M."/>
            <person name="Akai R."/>
            <person name="Kohno K."/>
            <person name="Iwawaki T."/>
        </authorList>
    </citation>
    <scope>DISRUPTION PHENOTYPE</scope>
</reference>
<reference key="9">
    <citation type="journal article" date="2010" name="Cell">
        <title>A tissue-specific atlas of mouse protein phosphorylation and expression.</title>
        <authorList>
            <person name="Huttlin E.L."/>
            <person name="Jedrychowski M.P."/>
            <person name="Elias J.E."/>
            <person name="Goswami T."/>
            <person name="Rad R."/>
            <person name="Beausoleil S.A."/>
            <person name="Villen J."/>
            <person name="Haas W."/>
            <person name="Sowa M.E."/>
            <person name="Gygi S.P."/>
        </authorList>
    </citation>
    <scope>IDENTIFICATION BY MASS SPECTROMETRY [LARGE SCALE ANALYSIS]</scope>
    <source>
        <tissue>Brain</tissue>
        <tissue>Heart</tissue>
        <tissue>Kidney</tissue>
        <tissue>Liver</tissue>
        <tissue>Lung</tissue>
        <tissue>Pancreas</tissue>
        <tissue>Spleen</tissue>
        <tissue>Testis</tissue>
    </source>
</reference>
<reference key="10">
    <citation type="journal article" date="2011" name="Mol. Cell">
        <title>Structural basis of an ERAD pathway mediated by the ER-resident protein disulfide reductase ERdj5.</title>
        <authorList>
            <person name="Hagiwara M."/>
            <person name="Maegawa K."/>
            <person name="Suzuki M."/>
            <person name="Ushioda R."/>
            <person name="Araki K."/>
            <person name="Matsumoto Y."/>
            <person name="Hoseki J."/>
            <person name="Nagata K."/>
            <person name="Inaba K."/>
        </authorList>
    </citation>
    <scope>X-RAY CRYSTALLOGRAPHY (1.84 ANGSTROMS) OF 33-793</scope>
    <scope>FUNCTION</scope>
    <scope>INTERACTION WITH EDEM1</scope>
    <scope>MUTAGENESIS OF CYS-158; CYS-161; CYS-480; CYS-483; CYS-588; CYS-591; CYS-700 AND CYS-703</scope>
</reference>
<protein>
    <recommendedName>
        <fullName>DnaJ homolog subfamily C member 10</fullName>
        <ecNumber>1.8.4.-</ecNumber>
    </recommendedName>
    <alternativeName>
        <fullName>Endoplasmic reticulum DNA J domain-containing protein 5</fullName>
        <shortName>ER-resident protein ERdj5</shortName>
        <shortName>ERdj5</shortName>
    </alternativeName>
    <alternativeName>
        <fullName>Endoplasmic reticulum DnaJ-PDI fusion protein 1</fullName>
    </alternativeName>
    <alternativeName>
        <fullName>J domain-containing protein disulfide isomerase-like protein</fullName>
        <shortName>J domain-containing PDI-like protein</shortName>
        <shortName>JPDI</shortName>
    </alternativeName>
</protein>
<name>DJC10_MOUSE</name>
<organism>
    <name type="scientific">Mus musculus</name>
    <name type="common">Mouse</name>
    <dbReference type="NCBI Taxonomy" id="10090"/>
    <lineage>
        <taxon>Eukaryota</taxon>
        <taxon>Metazoa</taxon>
        <taxon>Chordata</taxon>
        <taxon>Craniata</taxon>
        <taxon>Vertebrata</taxon>
        <taxon>Euteleostomi</taxon>
        <taxon>Mammalia</taxon>
        <taxon>Eutheria</taxon>
        <taxon>Euarchontoglires</taxon>
        <taxon>Glires</taxon>
        <taxon>Rodentia</taxon>
        <taxon>Myomorpha</taxon>
        <taxon>Muroidea</taxon>
        <taxon>Muridae</taxon>
        <taxon>Murinae</taxon>
        <taxon>Mus</taxon>
        <taxon>Mus</taxon>
    </lineage>
</organism>
<feature type="signal peptide" evidence="1">
    <location>
        <begin position="1"/>
        <end position="32"/>
    </location>
</feature>
<feature type="chain" id="PRO_0000281484" description="DnaJ homolog subfamily C member 10">
    <location>
        <begin position="33"/>
        <end position="793"/>
    </location>
</feature>
<feature type="domain" description="J" evidence="2">
    <location>
        <begin position="35"/>
        <end position="100"/>
    </location>
</feature>
<feature type="domain" description="Thioredoxin 1" evidence="3">
    <location>
        <begin position="130"/>
        <end position="232"/>
    </location>
</feature>
<feature type="domain" description="Thioredoxin 2" evidence="3">
    <location>
        <begin position="454"/>
        <end position="553"/>
    </location>
</feature>
<feature type="domain" description="Thioredoxin 3" evidence="3">
    <location>
        <begin position="557"/>
        <end position="665"/>
    </location>
</feature>
<feature type="domain" description="Thioredoxin 4" evidence="3">
    <location>
        <begin position="671"/>
        <end position="776"/>
    </location>
</feature>
<feature type="region of interest" description="Trxb 1">
    <location>
        <begin position="235"/>
        <end position="350"/>
    </location>
</feature>
<feature type="region of interest" description="Trxb 2">
    <location>
        <begin position="348"/>
        <end position="463"/>
    </location>
</feature>
<feature type="short sequence motif" description="Prevents secretion from ER" evidence="4">
    <location>
        <begin position="790"/>
        <end position="793"/>
    </location>
</feature>
<feature type="glycosylation site" description="N-linked (GlcNAc...) asparagine" evidence="1">
    <location>
        <position position="530"/>
    </location>
</feature>
<feature type="disulfide bond" description="Redox-active">
    <location>
        <begin position="158"/>
        <end position="161"/>
    </location>
</feature>
<feature type="disulfide bond" description="Redox-active">
    <location>
        <begin position="480"/>
        <end position="483"/>
    </location>
</feature>
<feature type="disulfide bond" description="Redox-active">
    <location>
        <begin position="588"/>
        <end position="591"/>
    </location>
</feature>
<feature type="disulfide bond" description="Redox-active">
    <location>
        <begin position="700"/>
        <end position="703"/>
    </location>
</feature>
<feature type="mutagenesis site" description="Abolishes disulfide reductase activity; when associated with A-161; A-480; A-483; A-588; A-591; A-700 and A-703." evidence="7 9">
    <original>C</original>
    <variation>A</variation>
    <location>
        <position position="158"/>
    </location>
</feature>
<feature type="mutagenesis site" description="Abolishes disulfide reductase activity; when associated with A-158; A-480; A-483; A-588; A-591; A-700 and A-703." evidence="7 9">
    <original>C</original>
    <variation>A</variation>
    <location>
        <position position="161"/>
    </location>
</feature>
<feature type="mutagenesis site" description="Abolishes disulfide reductase activity; when associated with A-158; A-161; A-483; A-588; A-591; A-700 and A-703." evidence="7 9">
    <original>C</original>
    <variation>A</variation>
    <location>
        <position position="480"/>
    </location>
</feature>
<feature type="mutagenesis site" description="Abolishes disulfide reductase activity; when associated with A-158; A-161; A-480; A-588; A-591; A-700 and A-703." evidence="7 9">
    <original>C</original>
    <variation>A</variation>
    <location>
        <position position="483"/>
    </location>
</feature>
<feature type="mutagenesis site" description="Abolishes disulfide reductase activity; when associated with A-158; A-161; A-480; A-483; A-591; A-700 and A-703." evidence="7 9">
    <original>C</original>
    <variation>A</variation>
    <location>
        <position position="588"/>
    </location>
</feature>
<feature type="mutagenesis site" description="Abolishes disulfide reductase activity; when associated with A-158; A-161; A-480; A-483; A-588; A-700 and A-703." evidence="7 9">
    <original>C</original>
    <variation>A</variation>
    <location>
        <position position="591"/>
    </location>
</feature>
<feature type="mutagenesis site" description="Abolishes disulfide reductase activity; when associated with A-158; A-161; A-480; A-483; A-588; A-591 and A-703." evidence="7 9">
    <original>C</original>
    <variation>A</variation>
    <location>
        <position position="700"/>
    </location>
</feature>
<feature type="mutagenesis site" description="Abolishes disulfide reductase activity; when associated with A-158; A-161; A-480; A-483; A-588; A-591 and A-700." evidence="7 9">
    <original>C</original>
    <variation>A</variation>
    <location>
        <position position="703"/>
    </location>
</feature>
<feature type="sequence conflict" description="In Ref. 3; BAB23413." evidence="10" ref="3">
    <original>D</original>
    <variation>H</variation>
    <location>
        <position position="91"/>
    </location>
</feature>
<feature type="sequence conflict" description="In Ref. 2; AAQ14555." evidence="10" ref="2">
    <original>T</original>
    <variation>A</variation>
    <location>
        <position position="310"/>
    </location>
</feature>
<feature type="sequence conflict" description="In Ref. 4; AAH33461." evidence="10" ref="4">
    <original>E</original>
    <variation>G</variation>
    <location>
        <position position="324"/>
    </location>
</feature>
<feature type="sequence conflict" description="In Ref. 4; AAH33461." evidence="10" ref="4">
    <original>I</original>
    <variation>T</variation>
    <location>
        <position position="433"/>
    </location>
</feature>
<feature type="sequence conflict" description="In Ref. 2; AAQ14555." evidence="10" ref="2">
    <original>E</original>
    <variation>G</variation>
    <location>
        <position position="538"/>
    </location>
</feature>
<feature type="sequence conflict" description="In Ref. 2; AAQ14555." evidence="10" ref="2">
    <original>NG</original>
    <variation>RP</variation>
    <location>
        <begin position="651"/>
        <end position="652"/>
    </location>
</feature>
<feature type="sequence conflict" description="In Ref. 1; AAN73273." evidence="10" ref="1">
    <original>N</original>
    <variation>NS</variation>
    <location>
        <position position="654"/>
    </location>
</feature>
<feature type="sequence conflict" description="In Ref. 1; AAN73273." evidence="10" ref="1">
    <original>F</original>
    <variation>FR</variation>
    <location>
        <position position="680"/>
    </location>
</feature>
<feature type="sequence conflict" description="In Ref. 2; AAQ14555." evidence="10" ref="2">
    <original>D</original>
    <variation>M</variation>
    <location>
        <position position="767"/>
    </location>
</feature>
<feature type="helix" evidence="12">
    <location>
        <begin position="36"/>
        <end position="40"/>
    </location>
</feature>
<feature type="helix" evidence="12">
    <location>
        <begin position="48"/>
        <end position="62"/>
    </location>
</feature>
<feature type="helix" evidence="12">
    <location>
        <begin position="64"/>
        <end position="66"/>
    </location>
</feature>
<feature type="helix" evidence="12">
    <location>
        <begin position="73"/>
        <end position="87"/>
    </location>
</feature>
<feature type="helix" evidence="12">
    <location>
        <begin position="90"/>
        <end position="99"/>
    </location>
</feature>
<feature type="turn" evidence="12">
    <location>
        <begin position="100"/>
        <end position="103"/>
    </location>
</feature>
<feature type="helix" evidence="12">
    <location>
        <begin position="115"/>
        <end position="120"/>
    </location>
</feature>
<feature type="strand" evidence="12">
    <location>
        <begin position="121"/>
        <end position="123"/>
    </location>
</feature>
<feature type="turn" evidence="12">
    <location>
        <begin position="124"/>
        <end position="127"/>
    </location>
</feature>
<feature type="strand" evidence="12">
    <location>
        <begin position="131"/>
        <end position="133"/>
    </location>
</feature>
<feature type="helix" evidence="12">
    <location>
        <begin position="136"/>
        <end position="145"/>
    </location>
</feature>
<feature type="strand" evidence="12">
    <location>
        <begin position="149"/>
        <end position="154"/>
    </location>
</feature>
<feature type="helix" evidence="12">
    <location>
        <begin position="159"/>
        <end position="174"/>
    </location>
</feature>
<feature type="turn" evidence="14">
    <location>
        <begin position="175"/>
        <end position="178"/>
    </location>
</feature>
<feature type="strand" evidence="12">
    <location>
        <begin position="179"/>
        <end position="185"/>
    </location>
</feature>
<feature type="turn" evidence="12">
    <location>
        <begin position="186"/>
        <end position="188"/>
    </location>
</feature>
<feature type="helix" evidence="12">
    <location>
        <begin position="190"/>
        <end position="195"/>
    </location>
</feature>
<feature type="strand" evidence="12">
    <location>
        <begin position="200"/>
        <end position="207"/>
    </location>
</feature>
<feature type="strand" evidence="14">
    <location>
        <begin position="214"/>
        <end position="216"/>
    </location>
</feature>
<feature type="helix" evidence="12">
    <location>
        <begin position="222"/>
        <end position="234"/>
    </location>
</feature>
<feature type="strand" evidence="14">
    <location>
        <begin position="237"/>
        <end position="239"/>
    </location>
</feature>
<feature type="helix" evidence="14">
    <location>
        <begin position="242"/>
        <end position="255"/>
    </location>
</feature>
<feature type="strand" evidence="14">
    <location>
        <begin position="258"/>
        <end position="264"/>
    </location>
</feature>
<feature type="helix" evidence="14">
    <location>
        <begin position="273"/>
        <end position="282"/>
    </location>
</feature>
<feature type="turn" evidence="14">
    <location>
        <begin position="283"/>
        <end position="286"/>
    </location>
</feature>
<feature type="strand" evidence="14">
    <location>
        <begin position="287"/>
        <end position="293"/>
    </location>
</feature>
<feature type="turn" evidence="14">
    <location>
        <begin position="294"/>
        <end position="296"/>
    </location>
</feature>
<feature type="helix" evidence="14">
    <location>
        <begin position="298"/>
        <end position="301"/>
    </location>
</feature>
<feature type="turn" evidence="14">
    <location>
        <begin position="302"/>
        <end position="304"/>
    </location>
</feature>
<feature type="strand" evidence="14">
    <location>
        <begin position="310"/>
        <end position="314"/>
    </location>
</feature>
<feature type="turn" evidence="11">
    <location>
        <begin position="322"/>
        <end position="324"/>
    </location>
</feature>
<feature type="turn" evidence="14">
    <location>
        <begin position="325"/>
        <end position="327"/>
    </location>
</feature>
<feature type="strand" evidence="14">
    <location>
        <begin position="328"/>
        <end position="331"/>
    </location>
</feature>
<feature type="helix" evidence="14">
    <location>
        <begin position="336"/>
        <end position="346"/>
    </location>
</feature>
<feature type="strand" evidence="14">
    <location>
        <begin position="351"/>
        <end position="353"/>
    </location>
</feature>
<feature type="helix" evidence="14">
    <location>
        <begin position="355"/>
        <end position="361"/>
    </location>
</feature>
<feature type="turn" evidence="14">
    <location>
        <begin position="362"/>
        <end position="364"/>
    </location>
</feature>
<feature type="strand" evidence="14">
    <location>
        <begin position="365"/>
        <end position="372"/>
    </location>
</feature>
<feature type="turn" evidence="15">
    <location>
        <begin position="377"/>
        <end position="380"/>
    </location>
</feature>
<feature type="helix" evidence="14">
    <location>
        <begin position="382"/>
        <end position="386"/>
    </location>
</feature>
<feature type="helix" evidence="14">
    <location>
        <begin position="387"/>
        <end position="390"/>
    </location>
</feature>
<feature type="helix" evidence="14">
    <location>
        <begin position="392"/>
        <end position="394"/>
    </location>
</feature>
<feature type="strand" evidence="14">
    <location>
        <begin position="396"/>
        <end position="402"/>
    </location>
</feature>
<feature type="helix" evidence="14">
    <location>
        <begin position="403"/>
        <end position="405"/>
    </location>
</feature>
<feature type="helix" evidence="14">
    <location>
        <begin position="407"/>
        <end position="412"/>
    </location>
</feature>
<feature type="strand" evidence="14">
    <location>
        <begin position="417"/>
        <end position="423"/>
    </location>
</feature>
<feature type="strand" evidence="15">
    <location>
        <begin position="426"/>
        <end position="428"/>
    </location>
</feature>
<feature type="strand" evidence="14">
    <location>
        <begin position="431"/>
        <end position="433"/>
    </location>
</feature>
<feature type="helix" evidence="14">
    <location>
        <begin position="440"/>
        <end position="451"/>
    </location>
</feature>
<feature type="strand" evidence="14">
    <location>
        <begin position="455"/>
        <end position="457"/>
    </location>
</feature>
<feature type="helix" evidence="14">
    <location>
        <begin position="460"/>
        <end position="462"/>
    </location>
</feature>
<feature type="strand" evidence="14">
    <location>
        <begin position="471"/>
        <end position="476"/>
    </location>
</feature>
<feature type="helix" evidence="14">
    <location>
        <begin position="481"/>
        <end position="496"/>
    </location>
</feature>
<feature type="turn" evidence="14">
    <location>
        <begin position="497"/>
        <end position="500"/>
    </location>
</feature>
<feature type="strand" evidence="14">
    <location>
        <begin position="502"/>
        <end position="507"/>
    </location>
</feature>
<feature type="turn" evidence="14">
    <location>
        <begin position="508"/>
        <end position="510"/>
    </location>
</feature>
<feature type="helix" evidence="14">
    <location>
        <begin position="512"/>
        <end position="517"/>
    </location>
</feature>
<feature type="strand" evidence="14">
    <location>
        <begin position="525"/>
        <end position="530"/>
    </location>
</feature>
<feature type="strand" evidence="14">
    <location>
        <begin position="533"/>
        <end position="536"/>
    </location>
</feature>
<feature type="helix" evidence="14">
    <location>
        <begin position="543"/>
        <end position="554"/>
    </location>
</feature>
<feature type="strand" evidence="14">
    <location>
        <begin position="557"/>
        <end position="561"/>
    </location>
</feature>
<feature type="helix" evidence="14">
    <location>
        <begin position="563"/>
        <end position="569"/>
    </location>
</feature>
<feature type="turn" evidence="14">
    <location>
        <begin position="570"/>
        <end position="572"/>
    </location>
</feature>
<feature type="strand" evidence="14">
    <location>
        <begin position="579"/>
        <end position="584"/>
    </location>
</feature>
<feature type="helix" evidence="14">
    <location>
        <begin position="589"/>
        <end position="604"/>
    </location>
</feature>
<feature type="turn" evidence="14">
    <location>
        <begin position="605"/>
        <end position="608"/>
    </location>
</feature>
<feature type="strand" evidence="14">
    <location>
        <begin position="609"/>
        <end position="615"/>
    </location>
</feature>
<feature type="turn" evidence="14">
    <location>
        <begin position="616"/>
        <end position="619"/>
    </location>
</feature>
<feature type="helix" evidence="14">
    <location>
        <begin position="620"/>
        <end position="625"/>
    </location>
</feature>
<feature type="strand" evidence="14">
    <location>
        <begin position="630"/>
        <end position="637"/>
    </location>
</feature>
<feature type="strand" evidence="11">
    <location>
        <begin position="641"/>
        <end position="643"/>
    </location>
</feature>
<feature type="helix" evidence="14">
    <location>
        <begin position="657"/>
        <end position="665"/>
    </location>
</feature>
<feature type="strand" evidence="13">
    <location>
        <begin position="672"/>
        <end position="674"/>
    </location>
</feature>
<feature type="helix" evidence="13">
    <location>
        <begin position="677"/>
        <end position="683"/>
    </location>
</feature>
<feature type="turn" evidence="13">
    <location>
        <begin position="684"/>
        <end position="686"/>
    </location>
</feature>
<feature type="strand" evidence="14">
    <location>
        <begin position="687"/>
        <end position="689"/>
    </location>
</feature>
<feature type="strand" evidence="13">
    <location>
        <begin position="691"/>
        <end position="696"/>
    </location>
</feature>
<feature type="helix" evidence="13">
    <location>
        <begin position="701"/>
        <end position="717"/>
    </location>
</feature>
<feature type="turn" evidence="13">
    <location>
        <begin position="718"/>
        <end position="720"/>
    </location>
</feature>
<feature type="strand" evidence="13">
    <location>
        <begin position="722"/>
        <end position="727"/>
    </location>
</feature>
<feature type="turn" evidence="13">
    <location>
        <begin position="728"/>
        <end position="730"/>
    </location>
</feature>
<feature type="helix" evidence="13">
    <location>
        <begin position="732"/>
        <end position="737"/>
    </location>
</feature>
<feature type="strand" evidence="13">
    <location>
        <begin position="742"/>
        <end position="752"/>
    </location>
</feature>
<feature type="helix" evidence="13">
    <location>
        <begin position="753"/>
        <end position="755"/>
    </location>
</feature>
<feature type="strand" evidence="13">
    <location>
        <begin position="757"/>
        <end position="763"/>
    </location>
</feature>
<feature type="helix" evidence="13">
    <location>
        <begin position="768"/>
        <end position="780"/>
    </location>
</feature>